<proteinExistence type="evidence at protein level"/>
<evidence type="ECO:0000250" key="1"/>
<evidence type="ECO:0000255" key="2">
    <source>
        <dbReference type="PROSITE-ProRule" id="PRU01126"/>
    </source>
</evidence>
<evidence type="ECO:0000305" key="3"/>
<protein>
    <recommendedName>
        <fullName>Peptide methionine sulfoxide reductase MsrA/MsrB</fullName>
    </recommendedName>
    <domain>
        <recommendedName>
            <fullName>Peptide methionine sulfoxide reductase MsrA</fullName>
            <shortName>Protein-methionine-S-oxide reductase</shortName>
            <ecNumber>1.8.4.11</ecNumber>
        </recommendedName>
        <alternativeName>
            <fullName>Peptide-methionine (S)-S-oxide reductase</fullName>
            <shortName>Peptide Met(O) reductase</shortName>
        </alternativeName>
    </domain>
    <domain>
        <recommendedName>
            <fullName>Peptide methionine sulfoxide reductase MsrB</fullName>
            <ecNumber>1.8.4.12</ecNumber>
        </recommendedName>
        <alternativeName>
            <fullName>Peptide-methionine (R)-S-oxide reductase</fullName>
        </alternativeName>
    </domain>
</protein>
<gene>
    <name type="primary">msrAB</name>
    <name type="ordered locus">HI_1455</name>
</gene>
<organism>
    <name type="scientific">Haemophilus influenzae (strain ATCC 51907 / DSM 11121 / KW20 / Rd)</name>
    <dbReference type="NCBI Taxonomy" id="71421"/>
    <lineage>
        <taxon>Bacteria</taxon>
        <taxon>Pseudomonadati</taxon>
        <taxon>Pseudomonadota</taxon>
        <taxon>Gammaproteobacteria</taxon>
        <taxon>Pasteurellales</taxon>
        <taxon>Pasteurellaceae</taxon>
        <taxon>Haemophilus</taxon>
    </lineage>
</organism>
<dbReference type="EC" id="1.8.4.11"/>
<dbReference type="EC" id="1.8.4.12"/>
<dbReference type="EMBL" id="L42023">
    <property type="protein sequence ID" value="AAC23103.1"/>
    <property type="molecule type" value="Genomic_DNA"/>
</dbReference>
<dbReference type="PIR" id="E64124">
    <property type="entry name" value="E64124"/>
</dbReference>
<dbReference type="RefSeq" id="NP_439606.1">
    <property type="nucleotide sequence ID" value="NC_000907.1"/>
</dbReference>
<dbReference type="SMR" id="P45213"/>
<dbReference type="STRING" id="71421.HI_1455"/>
<dbReference type="EnsemblBacteria" id="AAC23103">
    <property type="protein sequence ID" value="AAC23103"/>
    <property type="gene ID" value="HI_1455"/>
</dbReference>
<dbReference type="KEGG" id="hin:HI_1455"/>
<dbReference type="PATRIC" id="fig|71421.8.peg.1516"/>
<dbReference type="eggNOG" id="COG0225">
    <property type="taxonomic scope" value="Bacteria"/>
</dbReference>
<dbReference type="eggNOG" id="COG0229">
    <property type="taxonomic scope" value="Bacteria"/>
</dbReference>
<dbReference type="HOGENOM" id="CLU_031040_1_0_6"/>
<dbReference type="OrthoDB" id="4174719at2"/>
<dbReference type="PhylomeDB" id="P45213"/>
<dbReference type="BioCyc" id="HINF71421:G1GJ1-1480-MONOMER"/>
<dbReference type="Proteomes" id="UP000000579">
    <property type="component" value="Chromosome"/>
</dbReference>
<dbReference type="GO" id="GO:0005737">
    <property type="term" value="C:cytoplasm"/>
    <property type="evidence" value="ECO:0000318"/>
    <property type="project" value="GO_Central"/>
</dbReference>
<dbReference type="GO" id="GO:0033744">
    <property type="term" value="F:L-methionine:thioredoxin-disulfide S-oxidoreductase activity"/>
    <property type="evidence" value="ECO:0007669"/>
    <property type="project" value="RHEA"/>
</dbReference>
<dbReference type="GO" id="GO:0033743">
    <property type="term" value="F:peptide-methionine (R)-S-oxide reductase activity"/>
    <property type="evidence" value="ECO:0000318"/>
    <property type="project" value="GO_Central"/>
</dbReference>
<dbReference type="GO" id="GO:0008113">
    <property type="term" value="F:peptide-methionine (S)-S-oxide reductase activity"/>
    <property type="evidence" value="ECO:0007669"/>
    <property type="project" value="UniProtKB-UniRule"/>
</dbReference>
<dbReference type="GO" id="GO:0036211">
    <property type="term" value="P:protein modification process"/>
    <property type="evidence" value="ECO:0007669"/>
    <property type="project" value="UniProtKB-UniRule"/>
</dbReference>
<dbReference type="GO" id="GO:0030091">
    <property type="term" value="P:protein repair"/>
    <property type="evidence" value="ECO:0007669"/>
    <property type="project" value="InterPro"/>
</dbReference>
<dbReference type="GO" id="GO:0006979">
    <property type="term" value="P:response to oxidative stress"/>
    <property type="evidence" value="ECO:0007669"/>
    <property type="project" value="InterPro"/>
</dbReference>
<dbReference type="FunFam" id="3.30.1060.10:FF:000007">
    <property type="entry name" value="Peptide methionine sulfoxide reductase msrA/msrB"/>
    <property type="match status" value="1"/>
</dbReference>
<dbReference type="FunFam" id="2.170.150.20:FF:000003">
    <property type="entry name" value="Peptide methionine sulfoxide reductase MsrB"/>
    <property type="match status" value="1"/>
</dbReference>
<dbReference type="Gene3D" id="2.170.150.20">
    <property type="entry name" value="Peptide methionine sulfoxide reductase"/>
    <property type="match status" value="1"/>
</dbReference>
<dbReference type="Gene3D" id="3.30.1060.10">
    <property type="entry name" value="Peptide methionine sulphoxide reductase MsrA"/>
    <property type="match status" value="1"/>
</dbReference>
<dbReference type="HAMAP" id="MF_01401">
    <property type="entry name" value="MsrA"/>
    <property type="match status" value="1"/>
</dbReference>
<dbReference type="HAMAP" id="MF_01400">
    <property type="entry name" value="MsrB"/>
    <property type="match status" value="1"/>
</dbReference>
<dbReference type="InterPro" id="IPR002569">
    <property type="entry name" value="Met_Sox_Rdtase_MsrA_dom"/>
</dbReference>
<dbReference type="InterPro" id="IPR036509">
    <property type="entry name" value="Met_Sox_Rdtase_MsrA_sf"/>
</dbReference>
<dbReference type="InterPro" id="IPR028427">
    <property type="entry name" value="Met_Sox_Rdtase_MsrB"/>
</dbReference>
<dbReference type="InterPro" id="IPR002579">
    <property type="entry name" value="Met_Sox_Rdtase_MsrB_dom"/>
</dbReference>
<dbReference type="InterPro" id="IPR011057">
    <property type="entry name" value="Mss4-like_sf"/>
</dbReference>
<dbReference type="NCBIfam" id="TIGR00401">
    <property type="entry name" value="msrA"/>
    <property type="match status" value="1"/>
</dbReference>
<dbReference type="NCBIfam" id="TIGR00357">
    <property type="entry name" value="peptide-methionine (R)-S-oxide reductase MsrB"/>
    <property type="match status" value="1"/>
</dbReference>
<dbReference type="NCBIfam" id="NF010625">
    <property type="entry name" value="PRK14018.1"/>
    <property type="match status" value="1"/>
</dbReference>
<dbReference type="PANTHER" id="PTHR10173">
    <property type="entry name" value="METHIONINE SULFOXIDE REDUCTASE"/>
    <property type="match status" value="1"/>
</dbReference>
<dbReference type="PANTHER" id="PTHR10173:SF59">
    <property type="entry name" value="PEPTIDE METHIONINE SULFOXIDE REDUCTASE MSRA_MSRB"/>
    <property type="match status" value="1"/>
</dbReference>
<dbReference type="Pfam" id="PF01625">
    <property type="entry name" value="PMSR"/>
    <property type="match status" value="1"/>
</dbReference>
<dbReference type="Pfam" id="PF01641">
    <property type="entry name" value="SelR"/>
    <property type="match status" value="1"/>
</dbReference>
<dbReference type="SUPFAM" id="SSF51316">
    <property type="entry name" value="Mss4-like"/>
    <property type="match status" value="1"/>
</dbReference>
<dbReference type="SUPFAM" id="SSF55068">
    <property type="entry name" value="Peptide methionine sulfoxide reductase"/>
    <property type="match status" value="1"/>
</dbReference>
<dbReference type="PROSITE" id="PS51790">
    <property type="entry name" value="MSRB"/>
    <property type="match status" value="1"/>
</dbReference>
<accession>P45213</accession>
<keyword id="KW-0511">Multifunctional enzyme</keyword>
<keyword id="KW-0560">Oxidoreductase</keyword>
<keyword id="KW-1185">Reference proteome</keyword>
<reference key="1">
    <citation type="journal article" date="1995" name="Science">
        <title>Whole-genome random sequencing and assembly of Haemophilus influenzae Rd.</title>
        <authorList>
            <person name="Fleischmann R.D."/>
            <person name="Adams M.D."/>
            <person name="White O."/>
            <person name="Clayton R.A."/>
            <person name="Kirkness E.F."/>
            <person name="Kerlavage A.R."/>
            <person name="Bult C.J."/>
            <person name="Tomb J.-F."/>
            <person name="Dougherty B.A."/>
            <person name="Merrick J.M."/>
            <person name="McKenney K."/>
            <person name="Sutton G.G."/>
            <person name="FitzHugh W."/>
            <person name="Fields C.A."/>
            <person name="Gocayne J.D."/>
            <person name="Scott J.D."/>
            <person name="Shirley R."/>
            <person name="Liu L.-I."/>
            <person name="Glodek A."/>
            <person name="Kelley J.M."/>
            <person name="Weidman J.F."/>
            <person name="Phillips C.A."/>
            <person name="Spriggs T."/>
            <person name="Hedblom E."/>
            <person name="Cotton M.D."/>
            <person name="Utterback T.R."/>
            <person name="Hanna M.C."/>
            <person name="Nguyen D.T."/>
            <person name="Saudek D.M."/>
            <person name="Brandon R.C."/>
            <person name="Fine L.D."/>
            <person name="Fritchman J.L."/>
            <person name="Fuhrmann J.L."/>
            <person name="Geoghagen N.S.M."/>
            <person name="Gnehm C.L."/>
            <person name="McDonald L.A."/>
            <person name="Small K.V."/>
            <person name="Fraser C.M."/>
            <person name="Smith H.O."/>
            <person name="Venter J.C."/>
        </authorList>
    </citation>
    <scope>NUCLEOTIDE SEQUENCE [LARGE SCALE GENOMIC DNA]</scope>
    <source>
        <strain>ATCC 51907 / DSM 11121 / KW20 / Rd</strain>
    </source>
</reference>
<reference key="2">
    <citation type="journal article" date="2000" name="Electrophoresis">
        <title>Two-dimensional map of the proteome of Haemophilus influenzae.</title>
        <authorList>
            <person name="Langen H."/>
            <person name="Takacs B."/>
            <person name="Evers S."/>
            <person name="Berndt P."/>
            <person name="Lahm H.W."/>
            <person name="Wipf B."/>
            <person name="Gray C."/>
            <person name="Fountoulakis M."/>
        </authorList>
    </citation>
    <scope>IDENTIFICATION BY MASS SPECTROMETRY</scope>
    <source>
        <strain>ATCC 51907 / DSM 11121 / KW20 / Rd</strain>
    </source>
</reference>
<comment type="function">
    <text evidence="1">Has an important function as a repair enzyme for proteins that have been inactivated by oxidation. Catalyzes the reversible oxidation-reduction of methionine sulfoxide in proteins to methionine (By similarity).</text>
</comment>
<comment type="catalytic activity">
    <reaction>
        <text>L-methionyl-[protein] + [thioredoxin]-disulfide + H2O = L-methionyl-(S)-S-oxide-[protein] + [thioredoxin]-dithiol</text>
        <dbReference type="Rhea" id="RHEA:14217"/>
        <dbReference type="Rhea" id="RHEA-COMP:10698"/>
        <dbReference type="Rhea" id="RHEA-COMP:10700"/>
        <dbReference type="Rhea" id="RHEA-COMP:12313"/>
        <dbReference type="Rhea" id="RHEA-COMP:12315"/>
        <dbReference type="ChEBI" id="CHEBI:15377"/>
        <dbReference type="ChEBI" id="CHEBI:16044"/>
        <dbReference type="ChEBI" id="CHEBI:29950"/>
        <dbReference type="ChEBI" id="CHEBI:44120"/>
        <dbReference type="ChEBI" id="CHEBI:50058"/>
        <dbReference type="EC" id="1.8.4.11"/>
    </reaction>
</comment>
<comment type="catalytic activity">
    <reaction>
        <text>[thioredoxin]-disulfide + L-methionine + H2O = L-methionine (S)-S-oxide + [thioredoxin]-dithiol</text>
        <dbReference type="Rhea" id="RHEA:19993"/>
        <dbReference type="Rhea" id="RHEA-COMP:10698"/>
        <dbReference type="Rhea" id="RHEA-COMP:10700"/>
        <dbReference type="ChEBI" id="CHEBI:15377"/>
        <dbReference type="ChEBI" id="CHEBI:29950"/>
        <dbReference type="ChEBI" id="CHEBI:50058"/>
        <dbReference type="ChEBI" id="CHEBI:57844"/>
        <dbReference type="ChEBI" id="CHEBI:58772"/>
        <dbReference type="EC" id="1.8.4.11"/>
    </reaction>
</comment>
<comment type="catalytic activity">
    <reaction>
        <text>L-methionyl-[protein] + [thioredoxin]-disulfide + H2O = L-methionyl-(R)-S-oxide-[protein] + [thioredoxin]-dithiol</text>
        <dbReference type="Rhea" id="RHEA:24164"/>
        <dbReference type="Rhea" id="RHEA-COMP:10698"/>
        <dbReference type="Rhea" id="RHEA-COMP:10700"/>
        <dbReference type="Rhea" id="RHEA-COMP:12313"/>
        <dbReference type="Rhea" id="RHEA-COMP:12314"/>
        <dbReference type="ChEBI" id="CHEBI:15377"/>
        <dbReference type="ChEBI" id="CHEBI:16044"/>
        <dbReference type="ChEBI" id="CHEBI:29950"/>
        <dbReference type="ChEBI" id="CHEBI:45764"/>
        <dbReference type="ChEBI" id="CHEBI:50058"/>
        <dbReference type="EC" id="1.8.4.12"/>
    </reaction>
</comment>
<comment type="similarity">
    <text evidence="3">In the N-terminal section; belongs to the MsrA Met sulfoxide reductase family.</text>
</comment>
<comment type="similarity">
    <text evidence="3">In the C-terminal section; belongs to the MsrB Met sulfoxide reductase family.</text>
</comment>
<feature type="chain" id="PRO_0000138513" description="Peptide methionine sulfoxide reductase MsrA/MsrB">
    <location>
        <begin position="1"/>
        <end position="353"/>
    </location>
</feature>
<feature type="domain" description="MsrB" evidence="2">
    <location>
        <begin position="213"/>
        <end position="336"/>
    </location>
</feature>
<feature type="region of interest" description="Peptide methionine sulfoxide reductase A">
    <location>
        <begin position="43"/>
        <end position="196"/>
    </location>
</feature>
<feature type="active site" evidence="1">
    <location>
        <position position="51"/>
    </location>
</feature>
<feature type="active site" description="Nucleophile" evidence="2">
    <location>
        <position position="325"/>
    </location>
</feature>
<sequence length="353" mass="39864">MKLSKTFLFITALCCATPTLAIQNSTSSSGEQKMAMENTQNIREIYLAGGCFWGMEAYMERIHGVKDAISGYANGNTEKTSYQMIGLTDHAETVKVTYDANQISLDKLLKYYFKVIDPTSVNKQGNDRGRQYRTGIYYQDGADKAVIGQALAQLQTKYKKPVQIEVQPLKNYIVAEEYHQDYLKKNPNGYCHIDITKADEPVIDEKDYPKPSDAELKAKLTPLQYSVTQNKHTERSFSNEYWDNFQPGIYVDITTGEPVFSSNDKFESGCGWPSFTKPIIKDVVHYETDNSFNMQRTEVLSRAGNAHLGHVFDDGPKDKGGLRYCINSASIKFIPLAEMEKAGYGYLIQSIKK</sequence>
<name>MSRAB_HAEIN</name>